<name>CBR4_XENTR</name>
<keyword id="KW-0275">Fatty acid biosynthesis</keyword>
<keyword id="KW-0276">Fatty acid metabolism</keyword>
<keyword id="KW-0444">Lipid biosynthesis</keyword>
<keyword id="KW-0443">Lipid metabolism</keyword>
<keyword id="KW-0496">Mitochondrion</keyword>
<keyword id="KW-0520">NAD</keyword>
<keyword id="KW-0521">NADP</keyword>
<keyword id="KW-0560">Oxidoreductase</keyword>
<keyword id="KW-1185">Reference proteome</keyword>
<comment type="function">
    <text evidence="1">The heterotetramer with HSD17B8 has NADH-dependent 3-ketoacyl-acyl carrier protein reductase activity, and thereby plays a role in mitochondrial fatty acid biosynthesis. Within the heterotetramer, HSD17B8 binds NADH; CBR4 binds NADPD. The homotetramer has NADPH-dependent quinone reductase activity. Both homotetramer and the heterotetramer have broad in vitro substrate specificity and can reduce 9,10-phenanthrenequinone, 1,4-benzoquinone and various other o-quinones and p-quinones.</text>
</comment>
<comment type="pathway">
    <text evidence="1">Lipid metabolism; fatty acid biosynthesis.</text>
</comment>
<comment type="subunit">
    <text evidence="1">Homotetramer (in vitro). Heterotetramer with HSD17B8; contains two molecules each of HSD17B8 and CBR4.</text>
</comment>
<comment type="subcellular location">
    <subcellularLocation>
        <location evidence="1">Mitochondrion matrix</location>
    </subcellularLocation>
</comment>
<comment type="similarity">
    <text evidence="3">Belongs to the short-chain dehydrogenases/reductases (SDR) family.</text>
</comment>
<feature type="chain" id="PRO_0000319883" description="Carbonyl reductase family member 4">
    <location>
        <begin position="1"/>
        <end position="236"/>
    </location>
</feature>
<feature type="active site" description="Proton acceptor" evidence="2">
    <location>
        <position position="147"/>
    </location>
</feature>
<feature type="binding site" evidence="1">
    <location>
        <begin position="11"/>
        <end position="14"/>
    </location>
    <ligand>
        <name>NADP(+)</name>
        <dbReference type="ChEBI" id="CHEBI:58349"/>
    </ligand>
</feature>
<feature type="binding site" evidence="1">
    <location>
        <begin position="34"/>
        <end position="35"/>
    </location>
    <ligand>
        <name>NADP(+)</name>
        <dbReference type="ChEBI" id="CHEBI:58349"/>
    </ligand>
</feature>
<feature type="binding site" evidence="1">
    <location>
        <position position="55"/>
    </location>
    <ligand>
        <name>NADP(+)</name>
        <dbReference type="ChEBI" id="CHEBI:58349"/>
    </ligand>
</feature>
<feature type="binding site" evidence="1">
    <location>
        <begin position="82"/>
        <end position="84"/>
    </location>
    <ligand>
        <name>NADP(+)</name>
        <dbReference type="ChEBI" id="CHEBI:58349"/>
    </ligand>
</feature>
<feature type="binding site" evidence="1">
    <location>
        <position position="134"/>
    </location>
    <ligand>
        <name>substrate</name>
    </ligand>
</feature>
<feature type="binding site" evidence="1">
    <location>
        <position position="147"/>
    </location>
    <ligand>
        <name>NADP(+)</name>
        <dbReference type="ChEBI" id="CHEBI:58349"/>
    </ligand>
</feature>
<feature type="binding site" evidence="1">
    <location>
        <position position="151"/>
    </location>
    <ligand>
        <name>NADP(+)</name>
        <dbReference type="ChEBI" id="CHEBI:58349"/>
    </ligand>
</feature>
<feature type="binding site" evidence="1">
    <location>
        <begin position="180"/>
        <end position="182"/>
    </location>
    <ligand>
        <name>NADP(+)</name>
        <dbReference type="ChEBI" id="CHEBI:58349"/>
    </ligand>
</feature>
<proteinExistence type="evidence at transcript level"/>
<organism>
    <name type="scientific">Xenopus tropicalis</name>
    <name type="common">Western clawed frog</name>
    <name type="synonym">Silurana tropicalis</name>
    <dbReference type="NCBI Taxonomy" id="8364"/>
    <lineage>
        <taxon>Eukaryota</taxon>
        <taxon>Metazoa</taxon>
        <taxon>Chordata</taxon>
        <taxon>Craniata</taxon>
        <taxon>Vertebrata</taxon>
        <taxon>Euteleostomi</taxon>
        <taxon>Amphibia</taxon>
        <taxon>Batrachia</taxon>
        <taxon>Anura</taxon>
        <taxon>Pipoidea</taxon>
        <taxon>Pipidae</taxon>
        <taxon>Xenopodinae</taxon>
        <taxon>Xenopus</taxon>
        <taxon>Silurana</taxon>
    </lineage>
</organism>
<gene>
    <name type="primary">cbr4</name>
</gene>
<protein>
    <recommendedName>
        <fullName>Carbonyl reductase family member 4</fullName>
        <ecNumber>1.-.-.-</ecNumber>
    </recommendedName>
    <alternativeName>
        <fullName evidence="1">3-ketoacyl-[acyl-carrier-protein] reductase beta subunit</fullName>
        <shortName evidence="1">KAR beta subunit</shortName>
    </alternativeName>
    <alternativeName>
        <fullName>3-oxoacyl-[acyl-carrier-protein] reductase</fullName>
        <ecNumber evidence="1">1.1.1.-</ecNumber>
    </alternativeName>
    <alternativeName>
        <fullName>Quinone reductase CBR4</fullName>
    </alternativeName>
</protein>
<evidence type="ECO:0000250" key="1">
    <source>
        <dbReference type="UniProtKB" id="Q8N4T8"/>
    </source>
</evidence>
<evidence type="ECO:0000255" key="2">
    <source>
        <dbReference type="PROSITE-ProRule" id="PRU10001"/>
    </source>
</evidence>
<evidence type="ECO:0000305" key="3"/>
<accession>Q68ER2</accession>
<sequence>MTKVCAVFGGSRGIGKAVSKLLAQRDYKVAVISRDLEVAKAAAAEVGAHLALSCDVSKENEIQDTFKEITNNLGNVDYLVNSAGIRRDALLLRTRSEDIRSLLSVNLVGTIQTCKLALRSMIQQQGGAIVNIGSIVGHKGNIGQSIYGASKEGLIGFSKSLAKEVAKRNIRVNVVAPGFIHTDMTLGLEEDSLTKMVPLGRFGDPEEVAQSVLFLLESPYITGHVLVVDGGLQLQM</sequence>
<dbReference type="EC" id="1.-.-.-"/>
<dbReference type="EC" id="1.1.1.-" evidence="1"/>
<dbReference type="EMBL" id="BC080139">
    <property type="protein sequence ID" value="AAH80139.1"/>
    <property type="molecule type" value="mRNA"/>
</dbReference>
<dbReference type="RefSeq" id="NP_001007873.1">
    <property type="nucleotide sequence ID" value="NM_001007872.1"/>
</dbReference>
<dbReference type="RefSeq" id="XP_012815703.1">
    <property type="nucleotide sequence ID" value="XM_012960249.3"/>
</dbReference>
<dbReference type="RefSeq" id="XP_012815704.1">
    <property type="nucleotide sequence ID" value="XM_012960250.3"/>
</dbReference>
<dbReference type="RefSeq" id="XP_012815711.1">
    <property type="nucleotide sequence ID" value="XM_012960257.3"/>
</dbReference>
<dbReference type="SMR" id="Q68ER2"/>
<dbReference type="FunCoup" id="Q68ER2">
    <property type="interactions" value="644"/>
</dbReference>
<dbReference type="STRING" id="8364.ENSXETP00000032113"/>
<dbReference type="PaxDb" id="8364-ENSXETP00000010799"/>
<dbReference type="DNASU" id="493259"/>
<dbReference type="GeneID" id="493259"/>
<dbReference type="KEGG" id="xtr:493259"/>
<dbReference type="AGR" id="Xenbase:XB-GENE-5935857"/>
<dbReference type="CTD" id="84869"/>
<dbReference type="eggNOG" id="KOG1200">
    <property type="taxonomic scope" value="Eukaryota"/>
</dbReference>
<dbReference type="HOGENOM" id="CLU_010194_1_3_1"/>
<dbReference type="InParanoid" id="Q68ER2"/>
<dbReference type="OMA" id="CQKHMVD"/>
<dbReference type="OrthoDB" id="294295at2759"/>
<dbReference type="PhylomeDB" id="Q68ER2"/>
<dbReference type="TreeFam" id="TF354265"/>
<dbReference type="Reactome" id="R-XTR-75105">
    <property type="pathway name" value="Fatty acyl-CoA biosynthesis"/>
</dbReference>
<dbReference type="UniPathway" id="UPA00094"/>
<dbReference type="Proteomes" id="UP000008143">
    <property type="component" value="Chromosome 1"/>
</dbReference>
<dbReference type="Bgee" id="ENSXETG00000004944">
    <property type="expression patterns" value="Expressed in testis and 13 other cell types or tissues"/>
</dbReference>
<dbReference type="GO" id="GO:0005759">
    <property type="term" value="C:mitochondrial matrix"/>
    <property type="evidence" value="ECO:0000250"/>
    <property type="project" value="UniProtKB"/>
</dbReference>
<dbReference type="GO" id="GO:1990204">
    <property type="term" value="C:oxidoreductase complex"/>
    <property type="evidence" value="ECO:0000250"/>
    <property type="project" value="UniProtKB"/>
</dbReference>
<dbReference type="GO" id="GO:0004316">
    <property type="term" value="F:3-oxoacyl-[acyl-carrier-protein] reductase (NADPH) activity"/>
    <property type="evidence" value="ECO:0000250"/>
    <property type="project" value="UniProtKB"/>
</dbReference>
<dbReference type="GO" id="GO:0006633">
    <property type="term" value="P:fatty acid biosynthetic process"/>
    <property type="evidence" value="ECO:0000250"/>
    <property type="project" value="UniProtKB"/>
</dbReference>
<dbReference type="GO" id="GO:0051290">
    <property type="term" value="P:protein heterotetramerization"/>
    <property type="evidence" value="ECO:0000250"/>
    <property type="project" value="UniProtKB"/>
</dbReference>
<dbReference type="FunFam" id="3.40.50.720:FF:000285">
    <property type="entry name" value="Carbonyl reductase family member 4"/>
    <property type="match status" value="1"/>
</dbReference>
<dbReference type="Gene3D" id="3.40.50.720">
    <property type="entry name" value="NAD(P)-binding Rossmann-like Domain"/>
    <property type="match status" value="1"/>
</dbReference>
<dbReference type="InterPro" id="IPR036291">
    <property type="entry name" value="NAD(P)-bd_dom_sf"/>
</dbReference>
<dbReference type="InterPro" id="IPR020904">
    <property type="entry name" value="Sc_DH/Rdtase_CS"/>
</dbReference>
<dbReference type="InterPro" id="IPR002347">
    <property type="entry name" value="SDR_fam"/>
</dbReference>
<dbReference type="PANTHER" id="PTHR42760:SF133">
    <property type="entry name" value="3-OXOACYL-[ACYL-CARRIER-PROTEIN] REDUCTASE"/>
    <property type="match status" value="1"/>
</dbReference>
<dbReference type="PANTHER" id="PTHR42760">
    <property type="entry name" value="SHORT-CHAIN DEHYDROGENASES/REDUCTASES FAMILY MEMBER"/>
    <property type="match status" value="1"/>
</dbReference>
<dbReference type="Pfam" id="PF13561">
    <property type="entry name" value="adh_short_C2"/>
    <property type="match status" value="1"/>
</dbReference>
<dbReference type="PRINTS" id="PR00081">
    <property type="entry name" value="GDHRDH"/>
</dbReference>
<dbReference type="PRINTS" id="PR00080">
    <property type="entry name" value="SDRFAMILY"/>
</dbReference>
<dbReference type="SUPFAM" id="SSF51735">
    <property type="entry name" value="NAD(P)-binding Rossmann-fold domains"/>
    <property type="match status" value="1"/>
</dbReference>
<dbReference type="PROSITE" id="PS00061">
    <property type="entry name" value="ADH_SHORT"/>
    <property type="match status" value="1"/>
</dbReference>
<reference key="1">
    <citation type="submission" date="2004-08" db="EMBL/GenBank/DDBJ databases">
        <authorList>
            <consortium name="NIH - Xenopus Gene Collection (XGC) project"/>
        </authorList>
    </citation>
    <scope>NUCLEOTIDE SEQUENCE [LARGE SCALE MRNA]</scope>
    <source>
        <tissue>Embryo</tissue>
    </source>
</reference>